<accession>Q3IF22</accession>
<evidence type="ECO:0000255" key="1">
    <source>
        <dbReference type="HAMAP-Rule" id="MF_01320"/>
    </source>
</evidence>
<evidence type="ECO:0000256" key="2">
    <source>
        <dbReference type="SAM" id="MobiDB-lite"/>
    </source>
</evidence>
<evidence type="ECO:0000305" key="3"/>
<proteinExistence type="inferred from homology"/>
<feature type="chain" id="PRO_0000237226" description="Large ribosomal subunit protein uL2">
    <location>
        <begin position="1"/>
        <end position="274"/>
    </location>
</feature>
<feature type="region of interest" description="Disordered" evidence="2">
    <location>
        <begin position="28"/>
        <end position="53"/>
    </location>
</feature>
<feature type="region of interest" description="Disordered" evidence="2">
    <location>
        <begin position="223"/>
        <end position="274"/>
    </location>
</feature>
<feature type="compositionally biased region" description="Low complexity" evidence="2">
    <location>
        <begin position="39"/>
        <end position="48"/>
    </location>
</feature>
<feature type="compositionally biased region" description="Basic residues" evidence="2">
    <location>
        <begin position="254"/>
        <end position="274"/>
    </location>
</feature>
<sequence length="274" mass="29892">MALQKCKPTSAGRRHLVKVVNSDLHKGKPYAPLLEKNSKSGGRNNNGRITVRHIGGGHKQHYRLIDFKRTKDGIPATVERLEYDPNRSANIALVLYADGERRYIIAPKGLKAGDAIQSGVDAPIKPGNALPMRNMPVGSTVHNVELKPGKGAQIARSAGAYVQILARDGQYVTLRLRSGEVRKVEADCRATLGEVGNAEHMLRSLGKAGANRWRGIRPTVRGVAMNPVDHPHGGGEGRTSGGRHPVSPWGKPTKGAKTRKNKRTDKFIVRRRTK</sequence>
<name>RL2_PSET1</name>
<reference key="1">
    <citation type="journal article" date="2005" name="Genome Res.">
        <title>Coping with cold: the genome of the versatile marine Antarctica bacterium Pseudoalteromonas haloplanktis TAC125.</title>
        <authorList>
            <person name="Medigue C."/>
            <person name="Krin E."/>
            <person name="Pascal G."/>
            <person name="Barbe V."/>
            <person name="Bernsel A."/>
            <person name="Bertin P.N."/>
            <person name="Cheung F."/>
            <person name="Cruveiller S."/>
            <person name="D'Amico S."/>
            <person name="Duilio A."/>
            <person name="Fang G."/>
            <person name="Feller G."/>
            <person name="Ho C."/>
            <person name="Mangenot S."/>
            <person name="Marino G."/>
            <person name="Nilsson J."/>
            <person name="Parrilli E."/>
            <person name="Rocha E.P.C."/>
            <person name="Rouy Z."/>
            <person name="Sekowska A."/>
            <person name="Tutino M.L."/>
            <person name="Vallenet D."/>
            <person name="von Heijne G."/>
            <person name="Danchin A."/>
        </authorList>
    </citation>
    <scope>NUCLEOTIDE SEQUENCE [LARGE SCALE GENOMIC DNA]</scope>
    <source>
        <strain>TAC 125</strain>
    </source>
</reference>
<organism>
    <name type="scientific">Pseudoalteromonas translucida (strain TAC 125)</name>
    <dbReference type="NCBI Taxonomy" id="326442"/>
    <lineage>
        <taxon>Bacteria</taxon>
        <taxon>Pseudomonadati</taxon>
        <taxon>Pseudomonadota</taxon>
        <taxon>Gammaproteobacteria</taxon>
        <taxon>Alteromonadales</taxon>
        <taxon>Pseudoalteromonadaceae</taxon>
        <taxon>Pseudoalteromonas</taxon>
    </lineage>
</organism>
<dbReference type="EMBL" id="CR954246">
    <property type="protein sequence ID" value="CAI85251.1"/>
    <property type="molecule type" value="Genomic_DNA"/>
</dbReference>
<dbReference type="SMR" id="Q3IF22"/>
<dbReference type="STRING" id="326442.PSHAa0147"/>
<dbReference type="KEGG" id="pha:PSHAa0147"/>
<dbReference type="eggNOG" id="COG0090">
    <property type="taxonomic scope" value="Bacteria"/>
</dbReference>
<dbReference type="HOGENOM" id="CLU_036235_2_1_6"/>
<dbReference type="BioCyc" id="PHAL326442:PSHA_RS00750-MONOMER"/>
<dbReference type="Proteomes" id="UP000006843">
    <property type="component" value="Chromosome I"/>
</dbReference>
<dbReference type="GO" id="GO:0015934">
    <property type="term" value="C:large ribosomal subunit"/>
    <property type="evidence" value="ECO:0007669"/>
    <property type="project" value="InterPro"/>
</dbReference>
<dbReference type="GO" id="GO:0019843">
    <property type="term" value="F:rRNA binding"/>
    <property type="evidence" value="ECO:0007669"/>
    <property type="project" value="UniProtKB-UniRule"/>
</dbReference>
<dbReference type="GO" id="GO:0003735">
    <property type="term" value="F:structural constituent of ribosome"/>
    <property type="evidence" value="ECO:0007669"/>
    <property type="project" value="InterPro"/>
</dbReference>
<dbReference type="GO" id="GO:0016740">
    <property type="term" value="F:transferase activity"/>
    <property type="evidence" value="ECO:0007669"/>
    <property type="project" value="InterPro"/>
</dbReference>
<dbReference type="GO" id="GO:0002181">
    <property type="term" value="P:cytoplasmic translation"/>
    <property type="evidence" value="ECO:0007669"/>
    <property type="project" value="TreeGrafter"/>
</dbReference>
<dbReference type="FunFam" id="2.30.30.30:FF:000001">
    <property type="entry name" value="50S ribosomal protein L2"/>
    <property type="match status" value="1"/>
</dbReference>
<dbReference type="FunFam" id="2.40.50.140:FF:000003">
    <property type="entry name" value="50S ribosomal protein L2"/>
    <property type="match status" value="1"/>
</dbReference>
<dbReference type="FunFam" id="4.10.950.10:FF:000001">
    <property type="entry name" value="50S ribosomal protein L2"/>
    <property type="match status" value="1"/>
</dbReference>
<dbReference type="Gene3D" id="2.30.30.30">
    <property type="match status" value="1"/>
</dbReference>
<dbReference type="Gene3D" id="2.40.50.140">
    <property type="entry name" value="Nucleic acid-binding proteins"/>
    <property type="match status" value="1"/>
</dbReference>
<dbReference type="Gene3D" id="4.10.950.10">
    <property type="entry name" value="Ribosomal protein L2, domain 3"/>
    <property type="match status" value="1"/>
</dbReference>
<dbReference type="HAMAP" id="MF_01320_B">
    <property type="entry name" value="Ribosomal_uL2_B"/>
    <property type="match status" value="1"/>
</dbReference>
<dbReference type="InterPro" id="IPR012340">
    <property type="entry name" value="NA-bd_OB-fold"/>
</dbReference>
<dbReference type="InterPro" id="IPR014722">
    <property type="entry name" value="Rib_uL2_dom2"/>
</dbReference>
<dbReference type="InterPro" id="IPR002171">
    <property type="entry name" value="Ribosomal_uL2"/>
</dbReference>
<dbReference type="InterPro" id="IPR005880">
    <property type="entry name" value="Ribosomal_uL2_bac/org-type"/>
</dbReference>
<dbReference type="InterPro" id="IPR022669">
    <property type="entry name" value="Ribosomal_uL2_C"/>
</dbReference>
<dbReference type="InterPro" id="IPR022671">
    <property type="entry name" value="Ribosomal_uL2_CS"/>
</dbReference>
<dbReference type="InterPro" id="IPR014726">
    <property type="entry name" value="Ribosomal_uL2_dom3"/>
</dbReference>
<dbReference type="InterPro" id="IPR022666">
    <property type="entry name" value="Ribosomal_uL2_RNA-bd_dom"/>
</dbReference>
<dbReference type="InterPro" id="IPR008991">
    <property type="entry name" value="Translation_prot_SH3-like_sf"/>
</dbReference>
<dbReference type="NCBIfam" id="TIGR01171">
    <property type="entry name" value="rplB_bact"/>
    <property type="match status" value="1"/>
</dbReference>
<dbReference type="PANTHER" id="PTHR13691:SF5">
    <property type="entry name" value="LARGE RIBOSOMAL SUBUNIT PROTEIN UL2M"/>
    <property type="match status" value="1"/>
</dbReference>
<dbReference type="PANTHER" id="PTHR13691">
    <property type="entry name" value="RIBOSOMAL PROTEIN L2"/>
    <property type="match status" value="1"/>
</dbReference>
<dbReference type="Pfam" id="PF00181">
    <property type="entry name" value="Ribosomal_L2"/>
    <property type="match status" value="1"/>
</dbReference>
<dbReference type="Pfam" id="PF03947">
    <property type="entry name" value="Ribosomal_L2_C"/>
    <property type="match status" value="1"/>
</dbReference>
<dbReference type="PIRSF" id="PIRSF002158">
    <property type="entry name" value="Ribosomal_L2"/>
    <property type="match status" value="1"/>
</dbReference>
<dbReference type="SMART" id="SM01383">
    <property type="entry name" value="Ribosomal_L2"/>
    <property type="match status" value="1"/>
</dbReference>
<dbReference type="SMART" id="SM01382">
    <property type="entry name" value="Ribosomal_L2_C"/>
    <property type="match status" value="1"/>
</dbReference>
<dbReference type="SUPFAM" id="SSF50249">
    <property type="entry name" value="Nucleic acid-binding proteins"/>
    <property type="match status" value="1"/>
</dbReference>
<dbReference type="SUPFAM" id="SSF50104">
    <property type="entry name" value="Translation proteins SH3-like domain"/>
    <property type="match status" value="1"/>
</dbReference>
<dbReference type="PROSITE" id="PS00467">
    <property type="entry name" value="RIBOSOMAL_L2"/>
    <property type="match status" value="1"/>
</dbReference>
<comment type="function">
    <text evidence="1">One of the primary rRNA binding proteins. Required for association of the 30S and 50S subunits to form the 70S ribosome, for tRNA binding and peptide bond formation. It has been suggested to have peptidyltransferase activity; this is somewhat controversial. Makes several contacts with the 16S rRNA in the 70S ribosome.</text>
</comment>
<comment type="subunit">
    <text evidence="1">Part of the 50S ribosomal subunit. Forms a bridge to the 30S subunit in the 70S ribosome.</text>
</comment>
<comment type="similarity">
    <text evidence="1">Belongs to the universal ribosomal protein uL2 family.</text>
</comment>
<keyword id="KW-1185">Reference proteome</keyword>
<keyword id="KW-0687">Ribonucleoprotein</keyword>
<keyword id="KW-0689">Ribosomal protein</keyword>
<keyword id="KW-0694">RNA-binding</keyword>
<keyword id="KW-0699">rRNA-binding</keyword>
<gene>
    <name evidence="1" type="primary">rplB</name>
    <name type="ordered locus">PSHAa0147</name>
</gene>
<protein>
    <recommendedName>
        <fullName evidence="1">Large ribosomal subunit protein uL2</fullName>
    </recommendedName>
    <alternativeName>
        <fullName evidence="3">50S ribosomal protein L2</fullName>
    </alternativeName>
</protein>